<name>JAGN1_BOVIN</name>
<dbReference type="EMBL" id="BC111343">
    <property type="protein sequence ID" value="AAI11344.1"/>
    <property type="molecule type" value="mRNA"/>
</dbReference>
<dbReference type="RefSeq" id="NP_001039915.1">
    <property type="nucleotide sequence ID" value="NM_001046450.2"/>
</dbReference>
<dbReference type="SMR" id="Q2NKY9"/>
<dbReference type="FunCoup" id="Q2NKY9">
    <property type="interactions" value="2917"/>
</dbReference>
<dbReference type="STRING" id="9913.ENSBTAP00000030786"/>
<dbReference type="PaxDb" id="9913-ENSBTAP00000030786"/>
<dbReference type="Ensembl" id="ENSBTAT00000030816.4">
    <property type="protein sequence ID" value="ENSBTAP00000030786.2"/>
    <property type="gene ID" value="ENSBTAG00000010832.5"/>
</dbReference>
<dbReference type="GeneID" id="539101"/>
<dbReference type="KEGG" id="bta:539101"/>
<dbReference type="CTD" id="84522"/>
<dbReference type="VEuPathDB" id="HostDB:ENSBTAG00000010832"/>
<dbReference type="VGNC" id="VGNC:30363">
    <property type="gene designation" value="JAGN1"/>
</dbReference>
<dbReference type="eggNOG" id="KOG4054">
    <property type="taxonomic scope" value="Eukaryota"/>
</dbReference>
<dbReference type="GeneTree" id="ENSGT00390000005596"/>
<dbReference type="HOGENOM" id="CLU_121621_0_0_1"/>
<dbReference type="InParanoid" id="Q2NKY9"/>
<dbReference type="OMA" id="PYGVLWY"/>
<dbReference type="OrthoDB" id="8914197at2759"/>
<dbReference type="TreeFam" id="TF313137"/>
<dbReference type="Proteomes" id="UP000009136">
    <property type="component" value="Chromosome 22"/>
</dbReference>
<dbReference type="Bgee" id="ENSBTAG00000010832">
    <property type="expression patterns" value="Expressed in oocyte and 106 other cell types or tissues"/>
</dbReference>
<dbReference type="GO" id="GO:0005783">
    <property type="term" value="C:endoplasmic reticulum"/>
    <property type="evidence" value="ECO:0000250"/>
    <property type="project" value="UniProtKB"/>
</dbReference>
<dbReference type="GO" id="GO:0005789">
    <property type="term" value="C:endoplasmic reticulum membrane"/>
    <property type="evidence" value="ECO:0000318"/>
    <property type="project" value="GO_Central"/>
</dbReference>
<dbReference type="GO" id="GO:0050832">
    <property type="term" value="P:defense response to fungus"/>
    <property type="evidence" value="ECO:0000250"/>
    <property type="project" value="UniProtKB"/>
</dbReference>
<dbReference type="GO" id="GO:0007029">
    <property type="term" value="P:endoplasmic reticulum organization"/>
    <property type="evidence" value="ECO:0000318"/>
    <property type="project" value="GO_Central"/>
</dbReference>
<dbReference type="GO" id="GO:0038158">
    <property type="term" value="P:granulocyte colony-stimulating factor signaling pathway"/>
    <property type="evidence" value="ECO:0000250"/>
    <property type="project" value="UniProtKB"/>
</dbReference>
<dbReference type="GO" id="GO:1901142">
    <property type="term" value="P:insulin metabolic process"/>
    <property type="evidence" value="ECO:0007669"/>
    <property type="project" value="Ensembl"/>
</dbReference>
<dbReference type="GO" id="GO:0030073">
    <property type="term" value="P:insulin secretion"/>
    <property type="evidence" value="ECO:0007669"/>
    <property type="project" value="Ensembl"/>
</dbReference>
<dbReference type="GO" id="GO:0030223">
    <property type="term" value="P:neutrophil differentiation"/>
    <property type="evidence" value="ECO:0000250"/>
    <property type="project" value="UniProtKB"/>
</dbReference>
<dbReference type="GO" id="GO:0002446">
    <property type="term" value="P:neutrophil mediated immunity"/>
    <property type="evidence" value="ECO:0000250"/>
    <property type="project" value="UniProtKB"/>
</dbReference>
<dbReference type="GO" id="GO:1990266">
    <property type="term" value="P:neutrophil migration"/>
    <property type="evidence" value="ECO:0000250"/>
    <property type="project" value="UniProtKB"/>
</dbReference>
<dbReference type="GO" id="GO:0034976">
    <property type="term" value="P:response to endoplasmic reticulum stress"/>
    <property type="evidence" value="ECO:0007669"/>
    <property type="project" value="Ensembl"/>
</dbReference>
<dbReference type="GO" id="GO:0009749">
    <property type="term" value="P:response to glucose"/>
    <property type="evidence" value="ECO:0007669"/>
    <property type="project" value="Ensembl"/>
</dbReference>
<dbReference type="GO" id="GO:0016192">
    <property type="term" value="P:vesicle-mediated transport"/>
    <property type="evidence" value="ECO:0000250"/>
    <property type="project" value="UniProtKB"/>
</dbReference>
<dbReference type="InterPro" id="IPR009787">
    <property type="entry name" value="Jagunal"/>
</dbReference>
<dbReference type="PANTHER" id="PTHR20955">
    <property type="entry name" value="PROTEIN JAGUNAL HOMOLOG 1"/>
    <property type="match status" value="1"/>
</dbReference>
<dbReference type="PANTHER" id="PTHR20955:SF1">
    <property type="entry name" value="PROTEIN JAGUNAL HOMOLOG 1"/>
    <property type="match status" value="1"/>
</dbReference>
<dbReference type="Pfam" id="PF07086">
    <property type="entry name" value="Jagunal"/>
    <property type="match status" value="1"/>
</dbReference>
<protein>
    <recommendedName>
        <fullName evidence="4">Protein jagunal homolog 1</fullName>
    </recommendedName>
</protein>
<proteinExistence type="evidence at transcript level"/>
<sequence length="183" mass="21102">MASRAGPRAAGTDGSDFQHRERVAMHYQMSVTLKYEIKKLIYVHLVIWLLLVAKMSVGHLRLLSHDQVAMPYQWEYPYLLSVVPSLLGLLSFPRNNISYLVLSMISMGLFSIAPLIYGSMEMFPAAQQLYRHGKAYRFLFGFSAVSVMYLVLVLAVQVHAWQLYYSKKLLDSWFTSTQEKKRK</sequence>
<comment type="function">
    <text evidence="1 2">Endoplasmic reticulum transmembrane protein involved in vesicle-mediated transport, which is required for neutrophil function. Required for vesicle-mediated transport; it is however unclear whether it is involved in early secretory pathway or intracellular protein transport. Acts as a regulator of neutrophil function, probably via its role in vesicle-mediated transport: required for defense against fungal pathogens and for granulocyte colony-stimulating factor (GM-CSF) signaling pathway; possibly by regulating glycosylation and/or targeting of proteins contributing to the viability and migration of neutrophils.</text>
</comment>
<comment type="subunit">
    <text evidence="2">Interacts with COPA, COPB2 and COPG2.</text>
</comment>
<comment type="subcellular location">
    <subcellularLocation>
        <location evidence="2">Endoplasmic reticulum membrane</location>
        <topology evidence="3">Multi-pass membrane protein</topology>
    </subcellularLocation>
</comment>
<comment type="similarity">
    <text evidence="4">Belongs to the jagunal family.</text>
</comment>
<reference key="1">
    <citation type="submission" date="2005-12" db="EMBL/GenBank/DDBJ databases">
        <authorList>
            <consortium name="NIH - Mammalian Gene Collection (MGC) project"/>
        </authorList>
    </citation>
    <scope>NUCLEOTIDE SEQUENCE [LARGE SCALE MRNA]</scope>
    <source>
        <strain>Crossbred X Angus</strain>
        <tissue>Liver</tissue>
    </source>
</reference>
<accession>Q2NKY9</accession>
<feature type="chain" id="PRO_0000313607" description="Protein jagunal homolog 1">
    <location>
        <begin position="1"/>
        <end position="183"/>
    </location>
</feature>
<feature type="topological domain" description="Cytoplasmic" evidence="3">
    <location>
        <begin position="1"/>
        <end position="39"/>
    </location>
</feature>
<feature type="transmembrane region" description="Helical" evidence="3">
    <location>
        <begin position="40"/>
        <end position="60"/>
    </location>
</feature>
<feature type="topological domain" description="Lumenal" evidence="3">
    <location>
        <begin position="61"/>
        <end position="71"/>
    </location>
</feature>
<feature type="transmembrane region" description="Helical" evidence="3">
    <location>
        <begin position="72"/>
        <end position="92"/>
    </location>
</feature>
<feature type="topological domain" description="Cytoplasmic" evidence="3">
    <location>
        <begin position="93"/>
        <end position="96"/>
    </location>
</feature>
<feature type="transmembrane region" description="Helical" evidence="3">
    <location>
        <begin position="97"/>
        <end position="117"/>
    </location>
</feature>
<feature type="topological domain" description="Lumenal" evidence="3">
    <location>
        <begin position="118"/>
        <end position="137"/>
    </location>
</feature>
<feature type="transmembrane region" description="Helical" evidence="3">
    <location>
        <begin position="138"/>
        <end position="158"/>
    </location>
</feature>
<feature type="topological domain" description="Cytoplasmic" evidence="3">
    <location>
        <begin position="159"/>
        <end position="183"/>
    </location>
</feature>
<feature type="modified residue" description="Phosphoserine" evidence="2">
    <location>
        <position position="3"/>
    </location>
</feature>
<organism>
    <name type="scientific">Bos taurus</name>
    <name type="common">Bovine</name>
    <dbReference type="NCBI Taxonomy" id="9913"/>
    <lineage>
        <taxon>Eukaryota</taxon>
        <taxon>Metazoa</taxon>
        <taxon>Chordata</taxon>
        <taxon>Craniata</taxon>
        <taxon>Vertebrata</taxon>
        <taxon>Euteleostomi</taxon>
        <taxon>Mammalia</taxon>
        <taxon>Eutheria</taxon>
        <taxon>Laurasiatheria</taxon>
        <taxon>Artiodactyla</taxon>
        <taxon>Ruminantia</taxon>
        <taxon>Pecora</taxon>
        <taxon>Bovidae</taxon>
        <taxon>Bovinae</taxon>
        <taxon>Bos</taxon>
    </lineage>
</organism>
<keyword id="KW-0256">Endoplasmic reticulum</keyword>
<keyword id="KW-0391">Immunity</keyword>
<keyword id="KW-0472">Membrane</keyword>
<keyword id="KW-0597">Phosphoprotein</keyword>
<keyword id="KW-0653">Protein transport</keyword>
<keyword id="KW-1185">Reference proteome</keyword>
<keyword id="KW-0812">Transmembrane</keyword>
<keyword id="KW-1133">Transmembrane helix</keyword>
<keyword id="KW-0813">Transport</keyword>
<evidence type="ECO:0000250" key="1">
    <source>
        <dbReference type="UniProtKB" id="Q5XKN4"/>
    </source>
</evidence>
<evidence type="ECO:0000250" key="2">
    <source>
        <dbReference type="UniProtKB" id="Q8N5M9"/>
    </source>
</evidence>
<evidence type="ECO:0000255" key="3"/>
<evidence type="ECO:0000305" key="4"/>
<gene>
    <name type="primary">JAGN1</name>
</gene>